<keyword id="KW-0025">Alternative splicing</keyword>
<keyword id="KW-0472">Membrane</keyword>
<keyword id="KW-0597">Phosphoprotein</keyword>
<keyword id="KW-1267">Proteomics identification</keyword>
<keyword id="KW-1185">Reference proteome</keyword>
<keyword id="KW-0812">Transmembrane</keyword>
<keyword id="KW-1133">Transmembrane helix</keyword>
<evidence type="ECO:0000255" key="1"/>
<evidence type="ECO:0000256" key="2">
    <source>
        <dbReference type="SAM" id="MobiDB-lite"/>
    </source>
</evidence>
<evidence type="ECO:0000269" key="3">
    <source>
    </source>
</evidence>
<evidence type="ECO:0000303" key="4">
    <source>
    </source>
</evidence>
<evidence type="ECO:0000305" key="5"/>
<evidence type="ECO:0007744" key="6">
    <source>
    </source>
</evidence>
<gene>
    <name type="primary">TMEM184C</name>
    <name type="synonym">TMEM34</name>
    <name type="ORF">PRO1355</name>
</gene>
<feature type="chain" id="PRO_0000287567" description="Transmembrane protein 184C">
    <location>
        <begin position="1"/>
        <end position="438"/>
    </location>
</feature>
<feature type="transmembrane region" description="Helical" evidence="1">
    <location>
        <begin position="17"/>
        <end position="37"/>
    </location>
</feature>
<feature type="transmembrane region" description="Helical" evidence="1">
    <location>
        <begin position="48"/>
        <end position="68"/>
    </location>
</feature>
<feature type="transmembrane region" description="Helical" evidence="1">
    <location>
        <begin position="86"/>
        <end position="106"/>
    </location>
</feature>
<feature type="transmembrane region" description="Helical" evidence="1">
    <location>
        <begin position="179"/>
        <end position="199"/>
    </location>
</feature>
<feature type="transmembrane region" description="Helical" evidence="1">
    <location>
        <begin position="212"/>
        <end position="232"/>
    </location>
</feature>
<feature type="transmembrane region" description="Helical" evidence="1">
    <location>
        <begin position="254"/>
        <end position="274"/>
    </location>
</feature>
<feature type="transmembrane region" description="Helical" evidence="1">
    <location>
        <begin position="287"/>
        <end position="307"/>
    </location>
</feature>
<feature type="region of interest" description="Disordered" evidence="2">
    <location>
        <begin position="355"/>
        <end position="438"/>
    </location>
</feature>
<feature type="compositionally biased region" description="Low complexity" evidence="2">
    <location>
        <begin position="374"/>
        <end position="390"/>
    </location>
</feature>
<feature type="compositionally biased region" description="Low complexity" evidence="2">
    <location>
        <begin position="404"/>
        <end position="413"/>
    </location>
</feature>
<feature type="compositionally biased region" description="Basic and acidic residues" evidence="2">
    <location>
        <begin position="425"/>
        <end position="438"/>
    </location>
</feature>
<feature type="modified residue" description="Phosphoserine" evidence="6">
    <location>
        <position position="422"/>
    </location>
</feature>
<feature type="splice variant" id="VSP_025566" description="In isoform 2." evidence="4">
    <location>
        <begin position="262"/>
        <end position="438"/>
    </location>
</feature>
<feature type="sequence conflict" description="In Ref. 1; BAA90988." evidence="5" ref="1">
    <original>L</original>
    <variation>P</variation>
    <location>
        <position position="230"/>
    </location>
</feature>
<feature type="sequence conflict" description="In Ref. 1; BAA91851." evidence="5" ref="1">
    <original>K</original>
    <variation>R</variation>
    <location>
        <position position="252"/>
    </location>
</feature>
<feature type="sequence conflict" description="In Ref. 4; AAH46128." evidence="5" ref="4">
    <original>Q</original>
    <variation>P</variation>
    <location>
        <position position="261"/>
    </location>
</feature>
<feature type="sequence conflict" description="In Ref. 1; BAA91851." evidence="5" ref="1">
    <original>R</original>
    <variation>G</variation>
    <location>
        <position position="355"/>
    </location>
</feature>
<dbReference type="EMBL" id="AK000169">
    <property type="protein sequence ID" value="BAA90988.1"/>
    <property type="status" value="ALT_INIT"/>
    <property type="molecule type" value="mRNA"/>
</dbReference>
<dbReference type="EMBL" id="AK001708">
    <property type="protein sequence ID" value="BAA91851.1"/>
    <property type="molecule type" value="mRNA"/>
</dbReference>
<dbReference type="EMBL" id="BC008120">
    <property type="protein sequence ID" value="AAH08120.1"/>
    <property type="molecule type" value="mRNA"/>
</dbReference>
<dbReference type="EMBL" id="BC046128">
    <property type="protein sequence ID" value="AAH46128.1"/>
    <property type="molecule type" value="mRNA"/>
</dbReference>
<dbReference type="EMBL" id="AC093835">
    <property type="status" value="NOT_ANNOTATED_CDS"/>
    <property type="molecule type" value="Genomic_DNA"/>
</dbReference>
<dbReference type="EMBL" id="CH471056">
    <property type="protein sequence ID" value="EAX05015.1"/>
    <property type="molecule type" value="Genomic_DNA"/>
</dbReference>
<dbReference type="EMBL" id="CH471056">
    <property type="protein sequence ID" value="EAX05016.1"/>
    <property type="molecule type" value="Genomic_DNA"/>
</dbReference>
<dbReference type="EMBL" id="AF305823">
    <property type="protein sequence ID" value="AAK55526.1"/>
    <property type="status" value="ALT_INIT"/>
    <property type="molecule type" value="mRNA"/>
</dbReference>
<dbReference type="CCDS" id="CCDS3770.1">
    <molecule id="Q9NVA4-1"/>
</dbReference>
<dbReference type="RefSeq" id="NP_060711.2">
    <molecule id="Q9NVA4-1"/>
    <property type="nucleotide sequence ID" value="NM_018241.3"/>
</dbReference>
<dbReference type="BioGRID" id="120869">
    <property type="interactions" value="14"/>
</dbReference>
<dbReference type="FunCoup" id="Q9NVA4">
    <property type="interactions" value="1416"/>
</dbReference>
<dbReference type="IntAct" id="Q9NVA4">
    <property type="interactions" value="12"/>
</dbReference>
<dbReference type="MINT" id="Q9NVA4"/>
<dbReference type="STRING" id="9606.ENSP00000296582"/>
<dbReference type="iPTMnet" id="Q9NVA4"/>
<dbReference type="PhosphoSitePlus" id="Q9NVA4"/>
<dbReference type="SwissPalm" id="Q9NVA4"/>
<dbReference type="BioMuta" id="TMEM184C"/>
<dbReference type="DMDM" id="296452918"/>
<dbReference type="jPOST" id="Q9NVA4"/>
<dbReference type="MassIVE" id="Q9NVA4"/>
<dbReference type="PaxDb" id="9606-ENSP00000296582"/>
<dbReference type="PeptideAtlas" id="Q9NVA4"/>
<dbReference type="ProteomicsDB" id="82773">
    <molecule id="Q9NVA4-1"/>
</dbReference>
<dbReference type="Pumba" id="Q9NVA4"/>
<dbReference type="Antibodypedia" id="45494">
    <property type="antibodies" value="54 antibodies from 18 providers"/>
</dbReference>
<dbReference type="DNASU" id="55751"/>
<dbReference type="Ensembl" id="ENST00000296582.8">
    <molecule id="Q9NVA4-1"/>
    <property type="protein sequence ID" value="ENSP00000296582.3"/>
    <property type="gene ID" value="ENSG00000164168.8"/>
</dbReference>
<dbReference type="GeneID" id="55751"/>
<dbReference type="KEGG" id="hsa:55751"/>
<dbReference type="MANE-Select" id="ENST00000296582.8">
    <property type="protein sequence ID" value="ENSP00000296582.3"/>
    <property type="RefSeq nucleotide sequence ID" value="NM_018241.3"/>
    <property type="RefSeq protein sequence ID" value="NP_060711.2"/>
</dbReference>
<dbReference type="UCSC" id="uc003ila.5">
    <molecule id="Q9NVA4-1"/>
    <property type="organism name" value="human"/>
</dbReference>
<dbReference type="AGR" id="HGNC:25587"/>
<dbReference type="CTD" id="55751"/>
<dbReference type="DisGeNET" id="55751"/>
<dbReference type="GeneCards" id="TMEM184C"/>
<dbReference type="HGNC" id="HGNC:25587">
    <property type="gene designation" value="TMEM184C"/>
</dbReference>
<dbReference type="HPA" id="ENSG00000164168">
    <property type="expression patterns" value="Tissue enriched (parathyroid)"/>
</dbReference>
<dbReference type="MIM" id="613937">
    <property type="type" value="gene"/>
</dbReference>
<dbReference type="neXtProt" id="NX_Q9NVA4"/>
<dbReference type="OpenTargets" id="ENSG00000164168"/>
<dbReference type="PharmGKB" id="PA162406163"/>
<dbReference type="VEuPathDB" id="HostDB:ENSG00000164168"/>
<dbReference type="eggNOG" id="KOG2641">
    <property type="taxonomic scope" value="Eukaryota"/>
</dbReference>
<dbReference type="GeneTree" id="ENSGT00940000155201"/>
<dbReference type="HOGENOM" id="CLU_012923_1_1_1"/>
<dbReference type="InParanoid" id="Q9NVA4"/>
<dbReference type="OMA" id="AHAFVFN"/>
<dbReference type="OrthoDB" id="5348404at2759"/>
<dbReference type="PAN-GO" id="Q9NVA4">
    <property type="GO annotations" value="3 GO annotations based on evolutionary models"/>
</dbReference>
<dbReference type="PhylomeDB" id="Q9NVA4"/>
<dbReference type="TreeFam" id="TF324245"/>
<dbReference type="PathwayCommons" id="Q9NVA4"/>
<dbReference type="SignaLink" id="Q9NVA4"/>
<dbReference type="BioGRID-ORCS" id="55751">
    <property type="hits" value="31 hits in 1155 CRISPR screens"/>
</dbReference>
<dbReference type="ChiTaRS" id="TMEM184C">
    <property type="organism name" value="human"/>
</dbReference>
<dbReference type="GenomeRNAi" id="55751"/>
<dbReference type="Pharos" id="Q9NVA4">
    <property type="development level" value="Tdark"/>
</dbReference>
<dbReference type="PRO" id="PR:Q9NVA4"/>
<dbReference type="Proteomes" id="UP000005640">
    <property type="component" value="Chromosome 4"/>
</dbReference>
<dbReference type="RNAct" id="Q9NVA4">
    <property type="molecule type" value="protein"/>
</dbReference>
<dbReference type="Bgee" id="ENSG00000164168">
    <property type="expression patterns" value="Expressed in parotid gland and 194 other cell types or tissues"/>
</dbReference>
<dbReference type="ExpressionAtlas" id="Q9NVA4">
    <property type="expression patterns" value="baseline and differential"/>
</dbReference>
<dbReference type="GO" id="GO:0016020">
    <property type="term" value="C:membrane"/>
    <property type="evidence" value="ECO:0000318"/>
    <property type="project" value="GO_Central"/>
</dbReference>
<dbReference type="GO" id="GO:0022857">
    <property type="term" value="F:transmembrane transporter activity"/>
    <property type="evidence" value="ECO:0000318"/>
    <property type="project" value="GO_Central"/>
</dbReference>
<dbReference type="InterPro" id="IPR005178">
    <property type="entry name" value="Ostalpha/TMEM184C"/>
</dbReference>
<dbReference type="PANTHER" id="PTHR23423">
    <property type="entry name" value="ORGANIC SOLUTE TRANSPORTER-RELATED"/>
    <property type="match status" value="1"/>
</dbReference>
<dbReference type="Pfam" id="PF03619">
    <property type="entry name" value="Solute_trans_a"/>
    <property type="match status" value="1"/>
</dbReference>
<dbReference type="SMART" id="SM01417">
    <property type="entry name" value="Solute_trans_a"/>
    <property type="match status" value="1"/>
</dbReference>
<protein>
    <recommendedName>
        <fullName>Transmembrane protein 184C</fullName>
    </recommendedName>
    <alternativeName>
        <fullName>Transmembrane protein 34</fullName>
    </alternativeName>
</protein>
<reference key="1">
    <citation type="journal article" date="2004" name="Nat. Genet.">
        <title>Complete sequencing and characterization of 21,243 full-length human cDNAs.</title>
        <authorList>
            <person name="Ota T."/>
            <person name="Suzuki Y."/>
            <person name="Nishikawa T."/>
            <person name="Otsuki T."/>
            <person name="Sugiyama T."/>
            <person name="Irie R."/>
            <person name="Wakamatsu A."/>
            <person name="Hayashi K."/>
            <person name="Sato H."/>
            <person name="Nagai K."/>
            <person name="Kimura K."/>
            <person name="Makita H."/>
            <person name="Sekine M."/>
            <person name="Obayashi M."/>
            <person name="Nishi T."/>
            <person name="Shibahara T."/>
            <person name="Tanaka T."/>
            <person name="Ishii S."/>
            <person name="Yamamoto J."/>
            <person name="Saito K."/>
            <person name="Kawai Y."/>
            <person name="Isono Y."/>
            <person name="Nakamura Y."/>
            <person name="Nagahari K."/>
            <person name="Murakami K."/>
            <person name="Yasuda T."/>
            <person name="Iwayanagi T."/>
            <person name="Wagatsuma M."/>
            <person name="Shiratori A."/>
            <person name="Sudo H."/>
            <person name="Hosoiri T."/>
            <person name="Kaku Y."/>
            <person name="Kodaira H."/>
            <person name="Kondo H."/>
            <person name="Sugawara M."/>
            <person name="Takahashi M."/>
            <person name="Kanda K."/>
            <person name="Yokoi T."/>
            <person name="Furuya T."/>
            <person name="Kikkawa E."/>
            <person name="Omura Y."/>
            <person name="Abe K."/>
            <person name="Kamihara K."/>
            <person name="Katsuta N."/>
            <person name="Sato K."/>
            <person name="Tanikawa M."/>
            <person name="Yamazaki M."/>
            <person name="Ninomiya K."/>
            <person name="Ishibashi T."/>
            <person name="Yamashita H."/>
            <person name="Murakawa K."/>
            <person name="Fujimori K."/>
            <person name="Tanai H."/>
            <person name="Kimata M."/>
            <person name="Watanabe M."/>
            <person name="Hiraoka S."/>
            <person name="Chiba Y."/>
            <person name="Ishida S."/>
            <person name="Ono Y."/>
            <person name="Takiguchi S."/>
            <person name="Watanabe S."/>
            <person name="Yosida M."/>
            <person name="Hotuta T."/>
            <person name="Kusano J."/>
            <person name="Kanehori K."/>
            <person name="Takahashi-Fujii A."/>
            <person name="Hara H."/>
            <person name="Tanase T.-O."/>
            <person name="Nomura Y."/>
            <person name="Togiya S."/>
            <person name="Komai F."/>
            <person name="Hara R."/>
            <person name="Takeuchi K."/>
            <person name="Arita M."/>
            <person name="Imose N."/>
            <person name="Musashino K."/>
            <person name="Yuuki H."/>
            <person name="Oshima A."/>
            <person name="Sasaki N."/>
            <person name="Aotsuka S."/>
            <person name="Yoshikawa Y."/>
            <person name="Matsunawa H."/>
            <person name="Ichihara T."/>
            <person name="Shiohata N."/>
            <person name="Sano S."/>
            <person name="Moriya S."/>
            <person name="Momiyama H."/>
            <person name="Satoh N."/>
            <person name="Takami S."/>
            <person name="Terashima Y."/>
            <person name="Suzuki O."/>
            <person name="Nakagawa S."/>
            <person name="Senoh A."/>
            <person name="Mizoguchi H."/>
            <person name="Goto Y."/>
            <person name="Shimizu F."/>
            <person name="Wakebe H."/>
            <person name="Hishigaki H."/>
            <person name="Watanabe T."/>
            <person name="Sugiyama A."/>
            <person name="Takemoto M."/>
            <person name="Kawakami B."/>
            <person name="Yamazaki M."/>
            <person name="Watanabe K."/>
            <person name="Kumagai A."/>
            <person name="Itakura S."/>
            <person name="Fukuzumi Y."/>
            <person name="Fujimori Y."/>
            <person name="Komiyama M."/>
            <person name="Tashiro H."/>
            <person name="Tanigami A."/>
            <person name="Fujiwara T."/>
            <person name="Ono T."/>
            <person name="Yamada K."/>
            <person name="Fujii Y."/>
            <person name="Ozaki K."/>
            <person name="Hirao M."/>
            <person name="Ohmori Y."/>
            <person name="Kawabata A."/>
            <person name="Hikiji T."/>
            <person name="Kobatake N."/>
            <person name="Inagaki H."/>
            <person name="Ikema Y."/>
            <person name="Okamoto S."/>
            <person name="Okitani R."/>
            <person name="Kawakami T."/>
            <person name="Noguchi S."/>
            <person name="Itoh T."/>
            <person name="Shigeta K."/>
            <person name="Senba T."/>
            <person name="Matsumura K."/>
            <person name="Nakajima Y."/>
            <person name="Mizuno T."/>
            <person name="Morinaga M."/>
            <person name="Sasaki M."/>
            <person name="Togashi T."/>
            <person name="Oyama M."/>
            <person name="Hata H."/>
            <person name="Watanabe M."/>
            <person name="Komatsu T."/>
            <person name="Mizushima-Sugano J."/>
            <person name="Satoh T."/>
            <person name="Shirai Y."/>
            <person name="Takahashi Y."/>
            <person name="Nakagawa K."/>
            <person name="Okumura K."/>
            <person name="Nagase T."/>
            <person name="Nomura N."/>
            <person name="Kikuchi H."/>
            <person name="Masuho Y."/>
            <person name="Yamashita R."/>
            <person name="Nakai K."/>
            <person name="Yada T."/>
            <person name="Nakamura Y."/>
            <person name="Ohara O."/>
            <person name="Isogai T."/>
            <person name="Sugano S."/>
        </authorList>
    </citation>
    <scope>NUCLEOTIDE SEQUENCE [LARGE SCALE MRNA] (ISOFORM 1)</scope>
    <source>
        <tissue>Colon</tissue>
        <tissue>Teratocarcinoma</tissue>
    </source>
</reference>
<reference key="2">
    <citation type="journal article" date="2005" name="Nature">
        <title>Generation and annotation of the DNA sequences of human chromosomes 2 and 4.</title>
        <authorList>
            <person name="Hillier L.W."/>
            <person name="Graves T.A."/>
            <person name="Fulton R.S."/>
            <person name="Fulton L.A."/>
            <person name="Pepin K.H."/>
            <person name="Minx P."/>
            <person name="Wagner-McPherson C."/>
            <person name="Layman D."/>
            <person name="Wylie K."/>
            <person name="Sekhon M."/>
            <person name="Becker M.C."/>
            <person name="Fewell G.A."/>
            <person name="Delehaunty K.D."/>
            <person name="Miner T.L."/>
            <person name="Nash W.E."/>
            <person name="Kremitzki C."/>
            <person name="Oddy L."/>
            <person name="Du H."/>
            <person name="Sun H."/>
            <person name="Bradshaw-Cordum H."/>
            <person name="Ali J."/>
            <person name="Carter J."/>
            <person name="Cordes M."/>
            <person name="Harris A."/>
            <person name="Isak A."/>
            <person name="van Brunt A."/>
            <person name="Nguyen C."/>
            <person name="Du F."/>
            <person name="Courtney L."/>
            <person name="Kalicki J."/>
            <person name="Ozersky P."/>
            <person name="Abbott S."/>
            <person name="Armstrong J."/>
            <person name="Belter E.A."/>
            <person name="Caruso L."/>
            <person name="Cedroni M."/>
            <person name="Cotton M."/>
            <person name="Davidson T."/>
            <person name="Desai A."/>
            <person name="Elliott G."/>
            <person name="Erb T."/>
            <person name="Fronick C."/>
            <person name="Gaige T."/>
            <person name="Haakenson W."/>
            <person name="Haglund K."/>
            <person name="Holmes A."/>
            <person name="Harkins R."/>
            <person name="Kim K."/>
            <person name="Kruchowski S.S."/>
            <person name="Strong C.M."/>
            <person name="Grewal N."/>
            <person name="Goyea E."/>
            <person name="Hou S."/>
            <person name="Levy A."/>
            <person name="Martinka S."/>
            <person name="Mead K."/>
            <person name="McLellan M.D."/>
            <person name="Meyer R."/>
            <person name="Randall-Maher J."/>
            <person name="Tomlinson C."/>
            <person name="Dauphin-Kohlberg S."/>
            <person name="Kozlowicz-Reilly A."/>
            <person name="Shah N."/>
            <person name="Swearengen-Shahid S."/>
            <person name="Snider J."/>
            <person name="Strong J.T."/>
            <person name="Thompson J."/>
            <person name="Yoakum M."/>
            <person name="Leonard S."/>
            <person name="Pearman C."/>
            <person name="Trani L."/>
            <person name="Radionenko M."/>
            <person name="Waligorski J.E."/>
            <person name="Wang C."/>
            <person name="Rock S.M."/>
            <person name="Tin-Wollam A.-M."/>
            <person name="Maupin R."/>
            <person name="Latreille P."/>
            <person name="Wendl M.C."/>
            <person name="Yang S.-P."/>
            <person name="Pohl C."/>
            <person name="Wallis J.W."/>
            <person name="Spieth J."/>
            <person name="Bieri T.A."/>
            <person name="Berkowicz N."/>
            <person name="Nelson J.O."/>
            <person name="Osborne J."/>
            <person name="Ding L."/>
            <person name="Meyer R."/>
            <person name="Sabo A."/>
            <person name="Shotland Y."/>
            <person name="Sinha P."/>
            <person name="Wohldmann P.E."/>
            <person name="Cook L.L."/>
            <person name="Hickenbotham M.T."/>
            <person name="Eldred J."/>
            <person name="Williams D."/>
            <person name="Jones T.A."/>
            <person name="She X."/>
            <person name="Ciccarelli F.D."/>
            <person name="Izaurralde E."/>
            <person name="Taylor J."/>
            <person name="Schmutz J."/>
            <person name="Myers R.M."/>
            <person name="Cox D.R."/>
            <person name="Huang X."/>
            <person name="McPherson J.D."/>
            <person name="Mardis E.R."/>
            <person name="Clifton S.W."/>
            <person name="Warren W.C."/>
            <person name="Chinwalla A.T."/>
            <person name="Eddy S.R."/>
            <person name="Marra M.A."/>
            <person name="Ovcharenko I."/>
            <person name="Furey T.S."/>
            <person name="Miller W."/>
            <person name="Eichler E.E."/>
            <person name="Bork P."/>
            <person name="Suyama M."/>
            <person name="Torrents D."/>
            <person name="Waterston R.H."/>
            <person name="Wilson R.K."/>
        </authorList>
    </citation>
    <scope>NUCLEOTIDE SEQUENCE [LARGE SCALE GENOMIC DNA]</scope>
</reference>
<reference key="3">
    <citation type="submission" date="2005-09" db="EMBL/GenBank/DDBJ databases">
        <authorList>
            <person name="Mural R.J."/>
            <person name="Istrail S."/>
            <person name="Sutton G.G."/>
            <person name="Florea L."/>
            <person name="Halpern A.L."/>
            <person name="Mobarry C.M."/>
            <person name="Lippert R."/>
            <person name="Walenz B."/>
            <person name="Shatkay H."/>
            <person name="Dew I."/>
            <person name="Miller J.R."/>
            <person name="Flanigan M.J."/>
            <person name="Edwards N.J."/>
            <person name="Bolanos R."/>
            <person name="Fasulo D."/>
            <person name="Halldorsson B.V."/>
            <person name="Hannenhalli S."/>
            <person name="Turner R."/>
            <person name="Yooseph S."/>
            <person name="Lu F."/>
            <person name="Nusskern D.R."/>
            <person name="Shue B.C."/>
            <person name="Zheng X.H."/>
            <person name="Zhong F."/>
            <person name="Delcher A.L."/>
            <person name="Huson D.H."/>
            <person name="Kravitz S.A."/>
            <person name="Mouchard L."/>
            <person name="Reinert K."/>
            <person name="Remington K.A."/>
            <person name="Clark A.G."/>
            <person name="Waterman M.S."/>
            <person name="Eichler E.E."/>
            <person name="Adams M.D."/>
            <person name="Hunkapiller M.W."/>
            <person name="Myers E.W."/>
            <person name="Venter J.C."/>
        </authorList>
    </citation>
    <scope>NUCLEOTIDE SEQUENCE [LARGE SCALE GENOMIC DNA]</scope>
</reference>
<reference key="4">
    <citation type="journal article" date="2004" name="Genome Res.">
        <title>The status, quality, and expansion of the NIH full-length cDNA project: the Mammalian Gene Collection (MGC).</title>
        <authorList>
            <consortium name="The MGC Project Team"/>
        </authorList>
    </citation>
    <scope>NUCLEOTIDE SEQUENCE [LARGE SCALE MRNA] (ISOFORM 2)</scope>
    <scope>NUCLEOTIDE SEQUENCE [LARGE SCALE MRNA] OF 301-438 (ISOFORM 1)</scope>
    <source>
        <tissue>Lung</tissue>
        <tissue>Placenta</tissue>
    </source>
</reference>
<reference key="5">
    <citation type="journal article" date="2001" name="Genome Res.">
        <title>Gene expression profiling in human fetal liver and identification of tissue- and developmental-stage-specific genes through compiled expression profiles and efficient cloning of full-length cDNAs.</title>
        <authorList>
            <person name="Yu Y."/>
            <person name="Zhang C."/>
            <person name="Zhou G."/>
            <person name="Wu S."/>
            <person name="Qu X."/>
            <person name="Wei H."/>
            <person name="Xing G."/>
            <person name="Dong C."/>
            <person name="Zhai Y."/>
            <person name="Wan J."/>
            <person name="Ouyang S."/>
            <person name="Li L."/>
            <person name="Zhang S."/>
            <person name="Zhou K."/>
            <person name="Zhang Y."/>
            <person name="Wu C."/>
            <person name="He F."/>
        </authorList>
    </citation>
    <scope>NUCLEOTIDE SEQUENCE [LARGE SCALE MRNA] OF 259-438 (ISOFORM 1)</scope>
    <source>
        <tissue>Fetal liver</tissue>
    </source>
</reference>
<reference key="6">
    <citation type="journal article" date="2007" name="J. Cancer Res. Clin. Oncol.">
        <title>Down-regulation of an inhibitor of cell growth, transmembrane protein 34 (TMEM34), in anaplastic thyroid cancer.</title>
        <authorList>
            <person name="Akaishi J."/>
            <person name="Onda M."/>
            <person name="Okamoto J."/>
            <person name="Miyamoto S."/>
            <person name="Nagahama M."/>
            <person name="Ito K."/>
            <person name="Yoshida A."/>
            <person name="Shimizu K."/>
        </authorList>
    </citation>
    <scope>FUNCTION</scope>
    <scope>TISSUE SPECIFICITY</scope>
</reference>
<reference key="7">
    <citation type="journal article" date="2013" name="J. Proteome Res.">
        <title>Toward a comprehensive characterization of a human cancer cell phosphoproteome.</title>
        <authorList>
            <person name="Zhou H."/>
            <person name="Di Palma S."/>
            <person name="Preisinger C."/>
            <person name="Peng M."/>
            <person name="Polat A.N."/>
            <person name="Heck A.J."/>
            <person name="Mohammed S."/>
        </authorList>
    </citation>
    <scope>PHOSPHORYLATION [LARGE SCALE ANALYSIS] AT SER-422</scope>
    <scope>IDENTIFICATION BY MASS SPECTROMETRY [LARGE SCALE ANALYSIS]</scope>
    <source>
        <tissue>Cervix carcinoma</tissue>
        <tissue>Erythroleukemia</tissue>
    </source>
</reference>
<accession>Q9NVA4</accession>
<accession>D3DP04</accession>
<accession>Q86X84</accession>
<accession>Q969I7</accession>
<accession>Q9NXM2</accession>
<sequence>MPCTCTWRNWRQWIRPLVAVIYLVSIVVAVPLCVWELQKLEVGIHTKAWFIAGIFLLLTIPISLWVILQHLVHYTQPELQKPIIRILWMVPIYSLDSWIALKYPGIAIYVDTCRECYEAYVIYNFMGFLTNYLTNRYPNLVLILEAKDQQKHFPPLCCCPPWAMGEVLLFRCKLGVLQYTVVRPFTTIVALICELLGIYDEGNFSFSNAWTYLVIINNMSQLFAMYCLLLFYKVLKEELSPIQPVGKFLCVKLVVFVSFWQAVVIALLVKVGVISEKHTWEWQTVEAVATGLQDFIICIEMFLAAIAHHYTFSYKPYVQEAEEGSCFDSFLAMWDVSDIRDDISEQVRHVGRTVRGHPRKKLFPEDQDQNEHTSLLSSSSQDAISIASSMPPSPMGHYQGFGHTVTPQTTPTTAKISDEILSDTIGEKKEPSDKSVDS</sequence>
<proteinExistence type="evidence at protein level"/>
<comment type="function">
    <text evidence="3">Possible tumor suppressor which may play a role in cell growth.</text>
</comment>
<comment type="subcellular location">
    <subcellularLocation>
        <location evidence="5">Membrane</location>
        <topology evidence="5">Multi-pass membrane protein</topology>
    </subcellularLocation>
</comment>
<comment type="alternative products">
    <event type="alternative splicing"/>
    <isoform>
        <id>Q9NVA4-1</id>
        <name>1</name>
        <sequence type="displayed"/>
    </isoform>
    <isoform>
        <id>Q9NVA4-2</id>
        <name>2</name>
        <sequence type="described" ref="VSP_025566"/>
    </isoform>
</comment>
<comment type="tissue specificity">
    <text evidence="3">Widely expressed with higher expression in lung, kidney, spleen, pancreas, thymus, prostate, testis, ovary, small intestine and thyroid.</text>
</comment>
<comment type="similarity">
    <text evidence="5">Belongs to the TMEM184 family.</text>
</comment>
<comment type="sequence caution" evidence="5">
    <conflict type="erroneous initiation">
        <sequence resource="EMBL-CDS" id="AAK55526"/>
    </conflict>
    <text>Truncated N-terminus.</text>
</comment>
<comment type="sequence caution" evidence="5">
    <conflict type="erroneous initiation">
        <sequence resource="EMBL-CDS" id="BAA90988"/>
    </conflict>
    <text>Truncated N-terminus.</text>
</comment>
<organism>
    <name type="scientific">Homo sapiens</name>
    <name type="common">Human</name>
    <dbReference type="NCBI Taxonomy" id="9606"/>
    <lineage>
        <taxon>Eukaryota</taxon>
        <taxon>Metazoa</taxon>
        <taxon>Chordata</taxon>
        <taxon>Craniata</taxon>
        <taxon>Vertebrata</taxon>
        <taxon>Euteleostomi</taxon>
        <taxon>Mammalia</taxon>
        <taxon>Eutheria</taxon>
        <taxon>Euarchontoglires</taxon>
        <taxon>Primates</taxon>
        <taxon>Haplorrhini</taxon>
        <taxon>Catarrhini</taxon>
        <taxon>Hominidae</taxon>
        <taxon>Homo</taxon>
    </lineage>
</organism>
<name>T184C_HUMAN</name>